<name>YOHJ_ECOSE</name>
<reference key="1">
    <citation type="journal article" date="2008" name="DNA Res.">
        <title>Complete genome sequence and comparative analysis of the wild-type commensal Escherichia coli strain SE11 isolated from a healthy adult.</title>
        <authorList>
            <person name="Oshima K."/>
            <person name="Toh H."/>
            <person name="Ogura Y."/>
            <person name="Sasamoto H."/>
            <person name="Morita H."/>
            <person name="Park S.-H."/>
            <person name="Ooka T."/>
            <person name="Iyoda S."/>
            <person name="Taylor T.D."/>
            <person name="Hayashi T."/>
            <person name="Itoh K."/>
            <person name="Hattori M."/>
        </authorList>
    </citation>
    <scope>NUCLEOTIDE SEQUENCE [LARGE SCALE GENOMIC DNA]</scope>
    <source>
        <strain>SE11</strain>
    </source>
</reference>
<organism>
    <name type="scientific">Escherichia coli (strain SE11)</name>
    <dbReference type="NCBI Taxonomy" id="409438"/>
    <lineage>
        <taxon>Bacteria</taxon>
        <taxon>Pseudomonadati</taxon>
        <taxon>Pseudomonadota</taxon>
        <taxon>Gammaproteobacteria</taxon>
        <taxon>Enterobacterales</taxon>
        <taxon>Enterobacteriaceae</taxon>
        <taxon>Escherichia</taxon>
    </lineage>
</organism>
<keyword id="KW-0997">Cell inner membrane</keyword>
<keyword id="KW-1003">Cell membrane</keyword>
<keyword id="KW-0472">Membrane</keyword>
<keyword id="KW-0812">Transmembrane</keyword>
<keyword id="KW-1133">Transmembrane helix</keyword>
<evidence type="ECO:0000255" key="1">
    <source>
        <dbReference type="HAMAP-Rule" id="MF_01144"/>
    </source>
</evidence>
<proteinExistence type="inferred from homology"/>
<comment type="subcellular location">
    <subcellularLocation>
        <location evidence="1">Cell inner membrane</location>
        <topology evidence="1">Multi-pass membrane protein</topology>
    </subcellularLocation>
</comment>
<comment type="similarity">
    <text evidence="1">Belongs to the UPF0299 family.</text>
</comment>
<feature type="chain" id="PRO_1000137361" description="UPF0299 membrane protein YohJ">
    <location>
        <begin position="1"/>
        <end position="132"/>
    </location>
</feature>
<feature type="transmembrane region" description="Helical" evidence="1">
    <location>
        <begin position="7"/>
        <end position="27"/>
    </location>
</feature>
<feature type="transmembrane region" description="Helical" evidence="1">
    <location>
        <begin position="31"/>
        <end position="51"/>
    </location>
</feature>
<feature type="transmembrane region" description="Helical" evidence="1">
    <location>
        <begin position="63"/>
        <end position="83"/>
    </location>
</feature>
<feature type="transmembrane region" description="Helical" evidence="1">
    <location>
        <begin position="93"/>
        <end position="113"/>
    </location>
</feature>
<gene>
    <name evidence="1" type="primary">yohJ</name>
    <name type="ordered locus">ECSE_2408</name>
</gene>
<dbReference type="EMBL" id="AP009240">
    <property type="protein sequence ID" value="BAG77932.1"/>
    <property type="molecule type" value="Genomic_DNA"/>
</dbReference>
<dbReference type="RefSeq" id="WP_001295452.1">
    <property type="nucleotide sequence ID" value="NC_011415.1"/>
</dbReference>
<dbReference type="SMR" id="B6I8J1"/>
<dbReference type="KEGG" id="ecy:ECSE_2408"/>
<dbReference type="HOGENOM" id="CLU_113736_1_1_6"/>
<dbReference type="Proteomes" id="UP000008199">
    <property type="component" value="Chromosome"/>
</dbReference>
<dbReference type="GO" id="GO:0005886">
    <property type="term" value="C:plasma membrane"/>
    <property type="evidence" value="ECO:0007669"/>
    <property type="project" value="UniProtKB-SubCell"/>
</dbReference>
<dbReference type="HAMAP" id="MF_01144">
    <property type="entry name" value="UPF0299"/>
    <property type="match status" value="1"/>
</dbReference>
<dbReference type="InterPro" id="IPR005538">
    <property type="entry name" value="LrgA/CidA"/>
</dbReference>
<dbReference type="InterPro" id="IPR022957">
    <property type="entry name" value="Uncharacterised_UPF0299"/>
</dbReference>
<dbReference type="NCBIfam" id="NF002494">
    <property type="entry name" value="PRK01821.1"/>
    <property type="match status" value="1"/>
</dbReference>
<dbReference type="PANTHER" id="PTHR33931">
    <property type="entry name" value="HOLIN-LIKE PROTEIN CIDA-RELATED"/>
    <property type="match status" value="1"/>
</dbReference>
<dbReference type="PANTHER" id="PTHR33931:SF5">
    <property type="entry name" value="UPF0299 MEMBRANE PROTEIN YOHJ"/>
    <property type="match status" value="1"/>
</dbReference>
<dbReference type="Pfam" id="PF03788">
    <property type="entry name" value="LrgA"/>
    <property type="match status" value="1"/>
</dbReference>
<protein>
    <recommendedName>
        <fullName evidence="1">UPF0299 membrane protein YohJ</fullName>
    </recommendedName>
</protein>
<accession>B6I8J1</accession>
<sequence>MSKTLNIIWQYLRAFVLIYACLYAGIFIASLLPVTIPGSIIGMLILFVLLALQILPAKWVNPGCYVLIRYMALLFVPIGVGVMQYFDLLRAQFGPVVVSCAVSTLVVFLVVSWSSQLVHGERKVVGQKGSEE</sequence>